<reference key="1">
    <citation type="journal article" date="1996" name="Biochim. Biophys. Acta">
        <title>cDNA cloning and characterization of rat Clk3, a LAMMER kinase predominately expressed in testis.</title>
        <authorList>
            <person name="Becker W."/>
            <person name="Kentrup H."/>
            <person name="Heukelbach J."/>
            <person name="Joost H.G."/>
        </authorList>
    </citation>
    <scope>NUCLEOTIDE SEQUENCE [MRNA]</scope>
    <source>
        <strain>Sprague-Dawley</strain>
        <tissue>Brain</tissue>
    </source>
</reference>
<reference key="2">
    <citation type="journal article" date="2004" name="Genome Res.">
        <title>The status, quality, and expansion of the NIH full-length cDNA project: the Mammalian Gene Collection (MGC).</title>
        <authorList>
            <consortium name="The MGC Project Team"/>
        </authorList>
    </citation>
    <scope>NUCLEOTIDE SEQUENCE [LARGE SCALE MRNA]</scope>
    <source>
        <tissue>Lung</tissue>
    </source>
</reference>
<reference key="3">
    <citation type="journal article" date="2012" name="Nat. Commun.">
        <title>Quantitative maps of protein phosphorylation sites across 14 different rat organs and tissues.</title>
        <authorList>
            <person name="Lundby A."/>
            <person name="Secher A."/>
            <person name="Lage K."/>
            <person name="Nordsborg N.B."/>
            <person name="Dmytriyev A."/>
            <person name="Lundby C."/>
            <person name="Olsen J.V."/>
        </authorList>
    </citation>
    <scope>PHOSPHORYLATION [LARGE SCALE ANALYSIS] AT SER-9</scope>
    <scope>IDENTIFICATION BY MASS SPECTROMETRY [LARGE SCALE ANALYSIS]</scope>
</reference>
<evidence type="ECO:0000250" key="1"/>
<evidence type="ECO:0000250" key="2">
    <source>
        <dbReference type="UniProtKB" id="P49761"/>
    </source>
</evidence>
<evidence type="ECO:0000255" key="3">
    <source>
        <dbReference type="PROSITE-ProRule" id="PRU00159"/>
    </source>
</evidence>
<evidence type="ECO:0000255" key="4">
    <source>
        <dbReference type="PROSITE-ProRule" id="PRU10027"/>
    </source>
</evidence>
<evidence type="ECO:0000256" key="5">
    <source>
        <dbReference type="SAM" id="MobiDB-lite"/>
    </source>
</evidence>
<evidence type="ECO:0000305" key="6"/>
<evidence type="ECO:0007744" key="7">
    <source>
    </source>
</evidence>
<sequence length="490" mass="58485">MHHCKRYRSPEPDPYLSYRWKRRRSYSREHEGRLRYPSRREPPPRRSRSRSHDRIPYQRRYREHRDSDTYRCEERSPSFGEDCYGSSRSRHRRRSRERGPYRTRKHAHHCHKRRTRSCSSASSRSQQSSKRSSRSVEDDKEGHLVCRIGDWLQERYEIVGNLGEGTFGKVVECLDHARGKSQVALKIIRNVGKYREAARLEINVLKKIKEKDKENKFLCVLMSDWFNFHGHMCIAFELLGKNTFEFLKENNFQPYPLPHVRHMAYQLCHALRFLHENQLTHTDLKPENILFVNSEFETLYNEHKSCEEKSVKNTSIRVADFGSATFDHEHHTTIVATRHYRPPEVILELGWAQPCDVWSIGCILFEYYRGFTLFQTHENREHLVMMEKILGPIPSHMIHRTRKQKYFYKGGLVWDENSSDGRYVKENCKPLKSYMLQDSLEHVQLFDLMRRMLEFDPAQRITLAEALLHPFFAGLTPEERSFHSSRNPSR</sequence>
<dbReference type="EC" id="2.7.12.1"/>
<dbReference type="EMBL" id="X94351">
    <property type="protein sequence ID" value="CAA64076.1"/>
    <property type="molecule type" value="mRNA"/>
</dbReference>
<dbReference type="EMBL" id="BC070891">
    <property type="protein sequence ID" value="AAH70891.1"/>
    <property type="molecule type" value="mRNA"/>
</dbReference>
<dbReference type="PIR" id="S70352">
    <property type="entry name" value="S70352"/>
</dbReference>
<dbReference type="RefSeq" id="NP_599167.2">
    <property type="nucleotide sequence ID" value="NM_134340.3"/>
</dbReference>
<dbReference type="RefSeq" id="XP_038936675.1">
    <property type="nucleotide sequence ID" value="XM_039080747.2"/>
</dbReference>
<dbReference type="RefSeq" id="XP_063120894.1">
    <property type="nucleotide sequence ID" value="XM_063264824.1"/>
</dbReference>
<dbReference type="RefSeq" id="XP_063120895.1">
    <property type="nucleotide sequence ID" value="XM_063264825.1"/>
</dbReference>
<dbReference type="RefSeq" id="XP_063120896.1">
    <property type="nucleotide sequence ID" value="XM_063264826.1"/>
</dbReference>
<dbReference type="RefSeq" id="XP_063120897.1">
    <property type="nucleotide sequence ID" value="XM_063264827.1"/>
</dbReference>
<dbReference type="SMR" id="Q63117"/>
<dbReference type="FunCoup" id="Q63117">
    <property type="interactions" value="2741"/>
</dbReference>
<dbReference type="STRING" id="10116.ENSRNOP00000061691"/>
<dbReference type="iPTMnet" id="Q63117"/>
<dbReference type="PhosphoSitePlus" id="Q63117"/>
<dbReference type="PaxDb" id="10116-ENSRNOP00000061691"/>
<dbReference type="GeneID" id="171305"/>
<dbReference type="KEGG" id="rno:171305"/>
<dbReference type="UCSC" id="RGD:621259">
    <property type="organism name" value="rat"/>
</dbReference>
<dbReference type="AGR" id="RGD:621259"/>
<dbReference type="CTD" id="1198"/>
<dbReference type="RGD" id="621259">
    <property type="gene designation" value="Clk3"/>
</dbReference>
<dbReference type="VEuPathDB" id="HostDB:ENSRNOG00000030126"/>
<dbReference type="eggNOG" id="KOG0671">
    <property type="taxonomic scope" value="Eukaryota"/>
</dbReference>
<dbReference type="HOGENOM" id="CLU_000288_5_16_1"/>
<dbReference type="InParanoid" id="Q63117"/>
<dbReference type="OrthoDB" id="283111at2759"/>
<dbReference type="PhylomeDB" id="Q63117"/>
<dbReference type="BRENDA" id="2.7.12.1">
    <property type="organism ID" value="5301"/>
</dbReference>
<dbReference type="PRO" id="PR:Q63117"/>
<dbReference type="Proteomes" id="UP000002494">
    <property type="component" value="Chromosome 8"/>
</dbReference>
<dbReference type="Bgee" id="ENSRNOG00000030126">
    <property type="expression patterns" value="Expressed in thymus and 20 other cell types or tissues"/>
</dbReference>
<dbReference type="GO" id="GO:0001669">
    <property type="term" value="C:acrosomal vesicle"/>
    <property type="evidence" value="ECO:0007669"/>
    <property type="project" value="UniProtKB-SubCell"/>
</dbReference>
<dbReference type="GO" id="GO:0005634">
    <property type="term" value="C:nucleus"/>
    <property type="evidence" value="ECO:0000250"/>
    <property type="project" value="UniProtKB"/>
</dbReference>
<dbReference type="GO" id="GO:0005524">
    <property type="term" value="F:ATP binding"/>
    <property type="evidence" value="ECO:0007669"/>
    <property type="project" value="UniProtKB-KW"/>
</dbReference>
<dbReference type="GO" id="GO:0042802">
    <property type="term" value="F:identical protein binding"/>
    <property type="evidence" value="ECO:0000266"/>
    <property type="project" value="RGD"/>
</dbReference>
<dbReference type="GO" id="GO:0016301">
    <property type="term" value="F:kinase activity"/>
    <property type="evidence" value="ECO:0000314"/>
    <property type="project" value="RGD"/>
</dbReference>
<dbReference type="GO" id="GO:0004672">
    <property type="term" value="F:protein kinase activity"/>
    <property type="evidence" value="ECO:0000314"/>
    <property type="project" value="RGD"/>
</dbReference>
<dbReference type="GO" id="GO:0106310">
    <property type="term" value="F:protein serine kinase activity"/>
    <property type="evidence" value="ECO:0007669"/>
    <property type="project" value="RHEA"/>
</dbReference>
<dbReference type="GO" id="GO:0004674">
    <property type="term" value="F:protein serine/threonine kinase activity"/>
    <property type="evidence" value="ECO:0000250"/>
    <property type="project" value="UniProtKB"/>
</dbReference>
<dbReference type="GO" id="GO:0004712">
    <property type="term" value="F:protein serine/threonine/tyrosine kinase activity"/>
    <property type="evidence" value="ECO:0007669"/>
    <property type="project" value="UniProtKB-EC"/>
</dbReference>
<dbReference type="GO" id="GO:0004713">
    <property type="term" value="F:protein tyrosine kinase activity"/>
    <property type="evidence" value="ECO:0000266"/>
    <property type="project" value="RGD"/>
</dbReference>
<dbReference type="GO" id="GO:0043484">
    <property type="term" value="P:regulation of RNA splicing"/>
    <property type="evidence" value="ECO:0000250"/>
    <property type="project" value="UniProtKB"/>
</dbReference>
<dbReference type="CDD" id="cd14214">
    <property type="entry name" value="PKc_CLK3"/>
    <property type="match status" value="1"/>
</dbReference>
<dbReference type="FunFam" id="1.10.510.10:FF:000145">
    <property type="entry name" value="Dual specificity protein kinase CLK2"/>
    <property type="match status" value="1"/>
</dbReference>
<dbReference type="FunFam" id="3.30.200.20:FF:000061">
    <property type="entry name" value="Dual specificity protein kinase CLK2"/>
    <property type="match status" value="1"/>
</dbReference>
<dbReference type="Gene3D" id="3.30.200.20">
    <property type="entry name" value="Phosphorylase Kinase, domain 1"/>
    <property type="match status" value="1"/>
</dbReference>
<dbReference type="Gene3D" id="1.10.510.10">
    <property type="entry name" value="Transferase(Phosphotransferase) domain 1"/>
    <property type="match status" value="1"/>
</dbReference>
<dbReference type="InterPro" id="IPR051175">
    <property type="entry name" value="CLK_kinases"/>
</dbReference>
<dbReference type="InterPro" id="IPR011009">
    <property type="entry name" value="Kinase-like_dom_sf"/>
</dbReference>
<dbReference type="InterPro" id="IPR000719">
    <property type="entry name" value="Prot_kinase_dom"/>
</dbReference>
<dbReference type="InterPro" id="IPR017441">
    <property type="entry name" value="Protein_kinase_ATP_BS"/>
</dbReference>
<dbReference type="InterPro" id="IPR008271">
    <property type="entry name" value="Ser/Thr_kinase_AS"/>
</dbReference>
<dbReference type="PANTHER" id="PTHR45646:SF10">
    <property type="entry name" value="DUAL SPECIFICITY PROTEIN KINASE CLK3"/>
    <property type="match status" value="1"/>
</dbReference>
<dbReference type="PANTHER" id="PTHR45646">
    <property type="entry name" value="SERINE/THREONINE-PROTEIN KINASE DOA-RELATED"/>
    <property type="match status" value="1"/>
</dbReference>
<dbReference type="Pfam" id="PF00069">
    <property type="entry name" value="Pkinase"/>
    <property type="match status" value="1"/>
</dbReference>
<dbReference type="SMART" id="SM00220">
    <property type="entry name" value="S_TKc"/>
    <property type="match status" value="1"/>
</dbReference>
<dbReference type="SUPFAM" id="SSF56112">
    <property type="entry name" value="Protein kinase-like (PK-like)"/>
    <property type="match status" value="1"/>
</dbReference>
<dbReference type="PROSITE" id="PS00107">
    <property type="entry name" value="PROTEIN_KINASE_ATP"/>
    <property type="match status" value="1"/>
</dbReference>
<dbReference type="PROSITE" id="PS50011">
    <property type="entry name" value="PROTEIN_KINASE_DOM"/>
    <property type="match status" value="1"/>
</dbReference>
<dbReference type="PROSITE" id="PS00108">
    <property type="entry name" value="PROTEIN_KINASE_ST"/>
    <property type="match status" value="1"/>
</dbReference>
<comment type="function">
    <text evidence="1">Dual specificity kinase acting on both serine/threonine and tyrosine-containing substrates. Phosphorylates serine- and arginine-rich (SR) proteins of the spliceosomal complex. May be a constituent of a network of regulatory mechanisms that enable SR proteins to control RNA splicing and can cause redistribution of SR proteins from speckles to a diffuse nucleoplasmic distribution. Phosphorylates SRSF1 and SRSF3. Regulates the alternative splicing of tissue factor (F3) pre-mRNA in endothelial cells (By similarity).</text>
</comment>
<comment type="catalytic activity">
    <reaction>
        <text>L-seryl-[protein] + ATP = O-phospho-L-seryl-[protein] + ADP + H(+)</text>
        <dbReference type="Rhea" id="RHEA:17989"/>
        <dbReference type="Rhea" id="RHEA-COMP:9863"/>
        <dbReference type="Rhea" id="RHEA-COMP:11604"/>
        <dbReference type="ChEBI" id="CHEBI:15378"/>
        <dbReference type="ChEBI" id="CHEBI:29999"/>
        <dbReference type="ChEBI" id="CHEBI:30616"/>
        <dbReference type="ChEBI" id="CHEBI:83421"/>
        <dbReference type="ChEBI" id="CHEBI:456216"/>
        <dbReference type="EC" id="2.7.12.1"/>
    </reaction>
</comment>
<comment type="catalytic activity">
    <reaction>
        <text>L-threonyl-[protein] + ATP = O-phospho-L-threonyl-[protein] + ADP + H(+)</text>
        <dbReference type="Rhea" id="RHEA:46608"/>
        <dbReference type="Rhea" id="RHEA-COMP:11060"/>
        <dbReference type="Rhea" id="RHEA-COMP:11605"/>
        <dbReference type="ChEBI" id="CHEBI:15378"/>
        <dbReference type="ChEBI" id="CHEBI:30013"/>
        <dbReference type="ChEBI" id="CHEBI:30616"/>
        <dbReference type="ChEBI" id="CHEBI:61977"/>
        <dbReference type="ChEBI" id="CHEBI:456216"/>
        <dbReference type="EC" id="2.7.12.1"/>
    </reaction>
</comment>
<comment type="catalytic activity">
    <reaction>
        <text>L-tyrosyl-[protein] + ATP = O-phospho-L-tyrosyl-[protein] + ADP + H(+)</text>
        <dbReference type="Rhea" id="RHEA:10596"/>
        <dbReference type="Rhea" id="RHEA-COMP:10136"/>
        <dbReference type="Rhea" id="RHEA-COMP:20101"/>
        <dbReference type="ChEBI" id="CHEBI:15378"/>
        <dbReference type="ChEBI" id="CHEBI:30616"/>
        <dbReference type="ChEBI" id="CHEBI:46858"/>
        <dbReference type="ChEBI" id="CHEBI:61978"/>
        <dbReference type="ChEBI" id="CHEBI:456216"/>
        <dbReference type="EC" id="2.7.12.1"/>
    </reaction>
</comment>
<comment type="activity regulation">
    <text evidence="1">Leucettine L41 inhibits its kinase activity and affects the regulation of alternative splicing mediated by phosphorylation of SR proteins.</text>
</comment>
<comment type="subcellular location">
    <subcellularLocation>
        <location evidence="1">Nucleus</location>
    </subcellularLocation>
    <subcellularLocation>
        <location evidence="1">Cytoplasm</location>
    </subcellularLocation>
    <subcellularLocation>
        <location evidence="1">Cytoplasmic vesicle</location>
        <location evidence="1">Secretory vesicle</location>
        <location evidence="1">Acrosome</location>
    </subcellularLocation>
</comment>
<comment type="PTM">
    <text>Autophosphorylates on all three types of residues.</text>
</comment>
<comment type="similarity">
    <text evidence="6">Belongs to the protein kinase superfamily. CMGC Ser/Thr protein kinase family. Lammer subfamily.</text>
</comment>
<accession>Q63117</accession>
<accession>Q6IRK2</accession>
<name>CLK3_RAT</name>
<proteinExistence type="evidence at protein level"/>
<organism>
    <name type="scientific">Rattus norvegicus</name>
    <name type="common">Rat</name>
    <dbReference type="NCBI Taxonomy" id="10116"/>
    <lineage>
        <taxon>Eukaryota</taxon>
        <taxon>Metazoa</taxon>
        <taxon>Chordata</taxon>
        <taxon>Craniata</taxon>
        <taxon>Vertebrata</taxon>
        <taxon>Euteleostomi</taxon>
        <taxon>Mammalia</taxon>
        <taxon>Eutheria</taxon>
        <taxon>Euarchontoglires</taxon>
        <taxon>Glires</taxon>
        <taxon>Rodentia</taxon>
        <taxon>Myomorpha</taxon>
        <taxon>Muroidea</taxon>
        <taxon>Muridae</taxon>
        <taxon>Murinae</taxon>
        <taxon>Rattus</taxon>
    </lineage>
</organism>
<protein>
    <recommendedName>
        <fullName>Dual specificity protein kinase CLK3</fullName>
        <ecNumber>2.7.12.1</ecNumber>
    </recommendedName>
    <alternativeName>
        <fullName>CDC-like kinase 3</fullName>
    </alternativeName>
</protein>
<gene>
    <name type="primary">Clk3</name>
</gene>
<feature type="chain" id="PRO_0000085872" description="Dual specificity protein kinase CLK3">
    <location>
        <begin position="1"/>
        <end position="490"/>
    </location>
</feature>
<feature type="domain" description="Protein kinase" evidence="3">
    <location>
        <begin position="156"/>
        <end position="472"/>
    </location>
</feature>
<feature type="region of interest" description="Disordered" evidence="5">
    <location>
        <begin position="1"/>
        <end position="138"/>
    </location>
</feature>
<feature type="compositionally biased region" description="Basic and acidic residues" evidence="5">
    <location>
        <begin position="26"/>
        <end position="56"/>
    </location>
</feature>
<feature type="compositionally biased region" description="Basic and acidic residues" evidence="5">
    <location>
        <begin position="63"/>
        <end position="76"/>
    </location>
</feature>
<feature type="compositionally biased region" description="Basic residues" evidence="5">
    <location>
        <begin position="88"/>
        <end position="116"/>
    </location>
</feature>
<feature type="compositionally biased region" description="Low complexity" evidence="5">
    <location>
        <begin position="117"/>
        <end position="130"/>
    </location>
</feature>
<feature type="active site" description="Proton acceptor" evidence="3 4">
    <location>
        <position position="283"/>
    </location>
</feature>
<feature type="binding site" evidence="3">
    <location>
        <begin position="162"/>
        <end position="170"/>
    </location>
    <ligand>
        <name>ATP</name>
        <dbReference type="ChEBI" id="CHEBI:30616"/>
    </ligand>
</feature>
<feature type="binding site" evidence="3">
    <location>
        <position position="186"/>
    </location>
    <ligand>
        <name>ATP</name>
        <dbReference type="ChEBI" id="CHEBI:30616"/>
    </ligand>
</feature>
<feature type="modified residue" description="Phosphotyrosine" evidence="2">
    <location>
        <position position="7"/>
    </location>
</feature>
<feature type="modified residue" description="Phosphoserine" evidence="7">
    <location>
        <position position="9"/>
    </location>
</feature>
<feature type="modified residue" description="Phosphoserine" evidence="2">
    <location>
        <position position="49"/>
    </location>
</feature>
<feature type="modified residue" description="Phosphoserine" evidence="2">
    <location>
        <position position="51"/>
    </location>
</feature>
<feature type="modified residue" description="Phosphoserine" evidence="2">
    <location>
        <position position="67"/>
    </location>
</feature>
<feature type="modified residue" description="Phosphoserine" evidence="2">
    <location>
        <position position="76"/>
    </location>
</feature>
<feature type="modified residue" description="Phosphoserine" evidence="2">
    <location>
        <position position="78"/>
    </location>
</feature>
<feature type="modified residue" description="Phosphoserine" evidence="2">
    <location>
        <position position="135"/>
    </location>
</feature>
<feature type="sequence conflict" description="In Ref. 1; CAA64076." evidence="6" ref="1">
    <original>A</original>
    <variation>S</variation>
    <location>
        <position position="458"/>
    </location>
</feature>
<keyword id="KW-0067">ATP-binding</keyword>
<keyword id="KW-0963">Cytoplasm</keyword>
<keyword id="KW-0968">Cytoplasmic vesicle</keyword>
<keyword id="KW-0418">Kinase</keyword>
<keyword id="KW-0547">Nucleotide-binding</keyword>
<keyword id="KW-0539">Nucleus</keyword>
<keyword id="KW-0597">Phosphoprotein</keyword>
<keyword id="KW-1185">Reference proteome</keyword>
<keyword id="KW-0723">Serine/threonine-protein kinase</keyword>
<keyword id="KW-0808">Transferase</keyword>
<keyword id="KW-0829">Tyrosine-protein kinase</keyword>